<name>T1SB_MYCPN</name>
<accession>P75279</accession>
<organism>
    <name type="scientific">Mycoplasma pneumoniae (strain ATCC 29342 / M129 / Subtype 1)</name>
    <name type="common">Mycoplasmoides pneumoniae</name>
    <dbReference type="NCBI Taxonomy" id="272634"/>
    <lineage>
        <taxon>Bacteria</taxon>
        <taxon>Bacillati</taxon>
        <taxon>Mycoplasmatota</taxon>
        <taxon>Mycoplasmoidales</taxon>
        <taxon>Mycoplasmoidaceae</taxon>
        <taxon>Mycoplasmoides</taxon>
    </lineage>
</organism>
<dbReference type="EMBL" id="U00089">
    <property type="protein sequence ID" value="AAB95983.1"/>
    <property type="molecule type" value="Genomic_DNA"/>
</dbReference>
<dbReference type="PIR" id="S73661">
    <property type="entry name" value="S73661"/>
</dbReference>
<dbReference type="RefSeq" id="NP_110195.1">
    <property type="nucleotide sequence ID" value="NC_000912.1"/>
</dbReference>
<dbReference type="RefSeq" id="WP_010874863.1">
    <property type="nucleotide sequence ID" value="NC_000912.1"/>
</dbReference>
<dbReference type="SMR" id="P75279"/>
<dbReference type="IntAct" id="P75279">
    <property type="interactions" value="1"/>
</dbReference>
<dbReference type="STRING" id="272634.MPN_507"/>
<dbReference type="REBASE" id="6709">
    <property type="entry name" value="S.MpnORF507P"/>
</dbReference>
<dbReference type="EnsemblBacteria" id="AAB95983">
    <property type="protein sequence ID" value="AAB95983"/>
    <property type="gene ID" value="MPN_507"/>
</dbReference>
<dbReference type="KEGG" id="mpn:MPN_507"/>
<dbReference type="PATRIC" id="fig|272634.6.peg.556"/>
<dbReference type="HOGENOM" id="CLU_021095_6_0_14"/>
<dbReference type="OrthoDB" id="9795776at2"/>
<dbReference type="BioCyc" id="MPNE272634:G1GJ3-830-MONOMER"/>
<dbReference type="PRO" id="PR:P75279"/>
<dbReference type="Proteomes" id="UP000000808">
    <property type="component" value="Chromosome"/>
</dbReference>
<dbReference type="GO" id="GO:0003677">
    <property type="term" value="F:DNA binding"/>
    <property type="evidence" value="ECO:0007669"/>
    <property type="project" value="UniProtKB-KW"/>
</dbReference>
<dbReference type="GO" id="GO:0009307">
    <property type="term" value="P:DNA restriction-modification system"/>
    <property type="evidence" value="ECO:0007669"/>
    <property type="project" value="UniProtKB-KW"/>
</dbReference>
<dbReference type="CDD" id="cd17255">
    <property type="entry name" value="RMtype1_S_Fco49512ORF2615P-TRD2-CR2_like"/>
    <property type="match status" value="1"/>
</dbReference>
<dbReference type="Gene3D" id="3.90.220.20">
    <property type="entry name" value="DNA methylase specificity domains"/>
    <property type="match status" value="2"/>
</dbReference>
<dbReference type="InterPro" id="IPR000055">
    <property type="entry name" value="Restrct_endonuc_typeI_TRD"/>
</dbReference>
<dbReference type="InterPro" id="IPR044946">
    <property type="entry name" value="Restrct_endonuc_typeI_TRD_sf"/>
</dbReference>
<dbReference type="InterPro" id="IPR052021">
    <property type="entry name" value="Type-I_RS_S_subunit"/>
</dbReference>
<dbReference type="PANTHER" id="PTHR30408:SF13">
    <property type="entry name" value="TYPE I RESTRICTION ENZYME HINDI SPECIFICITY SUBUNIT"/>
    <property type="match status" value="1"/>
</dbReference>
<dbReference type="PANTHER" id="PTHR30408">
    <property type="entry name" value="TYPE-1 RESTRICTION ENZYME ECOKI SPECIFICITY PROTEIN"/>
    <property type="match status" value="1"/>
</dbReference>
<dbReference type="Pfam" id="PF01420">
    <property type="entry name" value="Methylase_S"/>
    <property type="match status" value="2"/>
</dbReference>
<dbReference type="SUPFAM" id="SSF116734">
    <property type="entry name" value="DNA methylase specificity domain"/>
    <property type="match status" value="2"/>
</dbReference>
<evidence type="ECO:0000250" key="1">
    <source>
        <dbReference type="UniProtKB" id="P05719"/>
    </source>
</evidence>
<evidence type="ECO:0000269" key="2">
    <source>
    </source>
</evidence>
<evidence type="ECO:0000303" key="3">
    <source>
    </source>
</evidence>
<evidence type="ECO:0000305" key="4"/>
<evidence type="ECO:0000305" key="5">
    <source>
    </source>
</evidence>
<proteinExistence type="evidence at protein level"/>
<reference key="1">
    <citation type="journal article" date="1996" name="Nucleic Acids Res.">
        <title>Complete sequence analysis of the genome of the bacterium Mycoplasma pneumoniae.</title>
        <authorList>
            <person name="Himmelreich R."/>
            <person name="Hilbert H."/>
            <person name="Plagens H."/>
            <person name="Pirkl E."/>
            <person name="Li B.-C."/>
            <person name="Herrmann R."/>
        </authorList>
    </citation>
    <scope>NUCLEOTIDE SEQUENCE [LARGE SCALE GENOMIC DNA]</scope>
    <source>
        <strain>ATCC 29342 / M129 / Subtype 1</strain>
    </source>
</reference>
<reference key="2">
    <citation type="journal article" date="2003" name="Nucleic Acids Res.">
        <title>A nomenclature for restriction enzymes, DNA methyltransferases, homing endonucleases and their genes.</title>
        <authorList>
            <person name="Roberts R.J."/>
            <person name="Belfort M."/>
            <person name="Bestor T."/>
            <person name="Bhagwat A.S."/>
            <person name="Bickle T.A."/>
            <person name="Bitinaite J."/>
            <person name="Blumenthal R.M."/>
            <person name="Degtyarev S.K."/>
            <person name="Dryden D.T."/>
            <person name="Dybvig K."/>
            <person name="Firman K."/>
            <person name="Gromova E.S."/>
            <person name="Gumport R.I."/>
            <person name="Halford S.E."/>
            <person name="Hattman S."/>
            <person name="Heitman J."/>
            <person name="Hornby D.P."/>
            <person name="Janulaitis A."/>
            <person name="Jeltsch A."/>
            <person name="Josephsen J."/>
            <person name="Kiss A."/>
            <person name="Klaenhammer T.R."/>
            <person name="Kobayashi I."/>
            <person name="Kong H."/>
            <person name="Krueger D.H."/>
            <person name="Lacks S."/>
            <person name="Marinus M.G."/>
            <person name="Miyahara M."/>
            <person name="Morgan R.D."/>
            <person name="Murray N.E."/>
            <person name="Nagaraja V."/>
            <person name="Piekarowicz A."/>
            <person name="Pingoud A."/>
            <person name="Raleigh E."/>
            <person name="Rao D.N."/>
            <person name="Reich N."/>
            <person name="Repin V.E."/>
            <person name="Selker E.U."/>
            <person name="Shaw P.C."/>
            <person name="Stein D.C."/>
            <person name="Stoddard B.L."/>
            <person name="Szybalski W."/>
            <person name="Trautner T.A."/>
            <person name="Van Etten J.L."/>
            <person name="Vitor J.M."/>
            <person name="Wilson G.G."/>
            <person name="Xu S.Y."/>
        </authorList>
    </citation>
    <scope>NOMENCLATURE</scope>
</reference>
<reference key="3">
    <citation type="journal article" date="2013" name="PLoS Genet.">
        <title>Comprehensive methylome characterization of Mycoplasma genitalium and Mycoplasma pneumoniae at single-base resolution.</title>
        <authorList>
            <person name="Lluch-Senar M."/>
            <person name="Luong K."/>
            <person name="Llorens-Rico V."/>
            <person name="Delgado J."/>
            <person name="Fang G."/>
            <person name="Spittle K."/>
            <person name="Clark T.A."/>
            <person name="Schadt E."/>
            <person name="Turner S.W."/>
            <person name="Korlach J."/>
            <person name="Serrano L."/>
        </authorList>
    </citation>
    <scope>INDUCTION</scope>
    <scope>DNA-BINDING</scope>
    <source>
        <strain>ATCC 29342 / M129 / Subtype 1</strain>
    </source>
</reference>
<comment type="function">
    <text evidence="3 5">The specificity (S) subunit of a type I methyltransferase (MTase); this subunit dictates DNA sequence specificity. The single R subunit has multiple frameshifts and is probably not expressed.</text>
</comment>
<comment type="subunit">
    <text evidence="1">The methyltransferase is composed of M and S polypeptides.</text>
</comment>
<comment type="induction">
    <text evidence="2">Detected at low levels after 6 and 96 hours growth, there are fewer copies at 96 hours (at protein level).</text>
</comment>
<comment type="domain">
    <text evidence="1">Contains two DNA recognition domains, each specifying recognition of one of the two defined components of the target sequence.</text>
</comment>
<comment type="similarity">
    <text evidence="4">Belongs to the type-I restriction system S methylase family.</text>
</comment>
<keyword id="KW-0238">DNA-binding</keyword>
<keyword id="KW-1185">Reference proteome</keyword>
<keyword id="KW-0680">Restriction system</keyword>
<gene>
    <name type="ordered locus">MPN_507</name>
    <name type="ORF">MP335</name>
    <name type="ORF">P02_orf363V</name>
</gene>
<sequence length="363" mass="42006">MQIRTYKIKDICDIQRGRGITKEYIKNNSGKYPVYSAATTNNGELGFINTYDFAGEYVTWTTNGYAGVVFYRNGKFSASQDCGVLKVRNKEINAQFLAFALSLKTPQFVHNLGSRPKLNRKVVAEISLDFPPLEVQEKIAHFLKSFNELSSQLKAELIKRQKQYAFYSDYLLNPKHSQGEEYKLFKLKDIAKKILVGGEKPSDFQKEKDQVYKYPILSNSRKADDFLGYSKTFRIAEKSITVSARGTIGAVFYRDFSYLPAVSLICFIPKPEFNINFLFHALKATKFHKQGSGTGQLTMAQFKEYQVYIPSLKKQQEIAATLDPLYYIFANSNWGIYKEIELRKKQMQYYQERLFQWIENQKV</sequence>
<feature type="chain" id="PRO_0000198045" description="Putative type I specificity subunit S.MpnORF507P">
    <location>
        <begin position="1"/>
        <end position="363"/>
    </location>
</feature>
<protein>
    <recommendedName>
        <fullName evidence="3">Putative type I specificity subunit S.MpnORF507P</fullName>
        <shortName>S protein</shortName>
        <shortName evidence="3">S.MpnORF507P</shortName>
    </recommendedName>
    <alternativeName>
        <fullName>Putative type-1 restriction enzyme specificity subunit MPN_507</fullName>
    </alternativeName>
    <alternativeName>
        <fullName>S.MpnORFBP</fullName>
    </alternativeName>
</protein>